<keyword id="KW-0067">ATP-binding</keyword>
<keyword id="KW-0238">DNA-binding</keyword>
<keyword id="KW-0479">Metal-binding</keyword>
<keyword id="KW-0547">Nucleotide-binding</keyword>
<keyword id="KW-0678">Repressor</keyword>
<keyword id="KW-0804">Transcription</keyword>
<keyword id="KW-0805">Transcription regulation</keyword>
<keyword id="KW-0862">Zinc</keyword>
<keyword id="KW-0863">Zinc-finger</keyword>
<feature type="chain" id="PRO_0000230869" description="Transcriptional repressor NrdR">
    <location>
        <begin position="1"/>
        <end position="153"/>
    </location>
</feature>
<feature type="domain" description="ATP-cone" evidence="1">
    <location>
        <begin position="49"/>
        <end position="139"/>
    </location>
</feature>
<feature type="zinc finger region" evidence="1">
    <location>
        <begin position="3"/>
        <end position="34"/>
    </location>
</feature>
<comment type="function">
    <text evidence="1">Negatively regulates transcription of bacterial ribonucleotide reductase nrd genes and operons by binding to NrdR-boxes.</text>
</comment>
<comment type="cofactor">
    <cofactor evidence="1">
        <name>Zn(2+)</name>
        <dbReference type="ChEBI" id="CHEBI:29105"/>
    </cofactor>
    <text evidence="1">Binds 1 zinc ion.</text>
</comment>
<comment type="similarity">
    <text evidence="1">Belongs to the NrdR family.</text>
</comment>
<gene>
    <name evidence="1" type="primary">nrdR</name>
    <name type="ordered locus">Erum1280</name>
    <name type="ordered locus">ERWE_CDS_01240</name>
</gene>
<organism>
    <name type="scientific">Ehrlichia ruminantium (strain Welgevonden)</name>
    <dbReference type="NCBI Taxonomy" id="254945"/>
    <lineage>
        <taxon>Bacteria</taxon>
        <taxon>Pseudomonadati</taxon>
        <taxon>Pseudomonadota</taxon>
        <taxon>Alphaproteobacteria</taxon>
        <taxon>Rickettsiales</taxon>
        <taxon>Anaplasmataceae</taxon>
        <taxon>Ehrlichia</taxon>
    </lineage>
</organism>
<reference key="1">
    <citation type="journal article" date="2005" name="Proc. Natl. Acad. Sci. U.S.A.">
        <title>The genome of the heartwater agent Ehrlichia ruminantium contains multiple tandem repeats of actively variable copy number.</title>
        <authorList>
            <person name="Collins N.E."/>
            <person name="Liebenberg J."/>
            <person name="de Villiers E.P."/>
            <person name="Brayton K.A."/>
            <person name="Louw E."/>
            <person name="Pretorius A."/>
            <person name="Faber F.E."/>
            <person name="van Heerden H."/>
            <person name="Josemans A."/>
            <person name="van Kleef M."/>
            <person name="Steyn H.C."/>
            <person name="van Strijp M.F."/>
            <person name="Zweygarth E."/>
            <person name="Jongejan F."/>
            <person name="Maillard J.C."/>
            <person name="Berthier D."/>
            <person name="Botha M."/>
            <person name="Joubert F."/>
            <person name="Corton C.H."/>
            <person name="Thomson N.R."/>
            <person name="Allsopp M.T."/>
            <person name="Allsopp B.A."/>
        </authorList>
    </citation>
    <scope>NUCLEOTIDE SEQUENCE [LARGE SCALE GENOMIC DNA]</scope>
    <source>
        <strain>Welgevonden</strain>
    </source>
</reference>
<reference key="2">
    <citation type="journal article" date="2006" name="J. Bacteriol.">
        <title>Comparative genomic analysis of three strains of Ehrlichia ruminantium reveals an active process of genome size plasticity.</title>
        <authorList>
            <person name="Frutos R."/>
            <person name="Viari A."/>
            <person name="Ferraz C."/>
            <person name="Morgat A."/>
            <person name="Eychenie S."/>
            <person name="Kandassamy Y."/>
            <person name="Chantal I."/>
            <person name="Bensaid A."/>
            <person name="Coissac E."/>
            <person name="Vachiery N."/>
            <person name="Demaille J."/>
            <person name="Martinez D."/>
        </authorList>
    </citation>
    <scope>NUCLEOTIDE SEQUENCE [LARGE SCALE GENOMIC DNA]</scope>
    <source>
        <strain>Welgevonden</strain>
    </source>
</reference>
<protein>
    <recommendedName>
        <fullName evidence="1">Transcriptional repressor NrdR</fullName>
    </recommendedName>
</protein>
<name>NRDR_EHRRW</name>
<dbReference type="EMBL" id="CR767821">
    <property type="protein sequence ID" value="CAH57844.1"/>
    <property type="molecule type" value="Genomic_DNA"/>
</dbReference>
<dbReference type="EMBL" id="CR925678">
    <property type="protein sequence ID" value="CAI26618.1"/>
    <property type="molecule type" value="Genomic_DNA"/>
</dbReference>
<dbReference type="RefSeq" id="WP_011154812.1">
    <property type="nucleotide sequence ID" value="NC_005295.2"/>
</dbReference>
<dbReference type="SMR" id="Q5HC48"/>
<dbReference type="GeneID" id="33058371"/>
<dbReference type="KEGG" id="eru:Erum1280"/>
<dbReference type="KEGG" id="erw:ERWE_CDS_01240"/>
<dbReference type="eggNOG" id="COG1327">
    <property type="taxonomic scope" value="Bacteria"/>
</dbReference>
<dbReference type="HOGENOM" id="CLU_108412_0_1_5"/>
<dbReference type="Proteomes" id="UP000001021">
    <property type="component" value="Chromosome"/>
</dbReference>
<dbReference type="GO" id="GO:0005524">
    <property type="term" value="F:ATP binding"/>
    <property type="evidence" value="ECO:0007669"/>
    <property type="project" value="UniProtKB-KW"/>
</dbReference>
<dbReference type="GO" id="GO:0003677">
    <property type="term" value="F:DNA binding"/>
    <property type="evidence" value="ECO:0007669"/>
    <property type="project" value="UniProtKB-KW"/>
</dbReference>
<dbReference type="GO" id="GO:0008270">
    <property type="term" value="F:zinc ion binding"/>
    <property type="evidence" value="ECO:0007669"/>
    <property type="project" value="UniProtKB-UniRule"/>
</dbReference>
<dbReference type="GO" id="GO:0045892">
    <property type="term" value="P:negative regulation of DNA-templated transcription"/>
    <property type="evidence" value="ECO:0007669"/>
    <property type="project" value="UniProtKB-UniRule"/>
</dbReference>
<dbReference type="HAMAP" id="MF_00440">
    <property type="entry name" value="NrdR"/>
    <property type="match status" value="1"/>
</dbReference>
<dbReference type="InterPro" id="IPR005144">
    <property type="entry name" value="ATP-cone_dom"/>
</dbReference>
<dbReference type="InterPro" id="IPR055173">
    <property type="entry name" value="NrdR-like_N"/>
</dbReference>
<dbReference type="InterPro" id="IPR003796">
    <property type="entry name" value="RNR_NrdR-like"/>
</dbReference>
<dbReference type="NCBIfam" id="TIGR00244">
    <property type="entry name" value="transcriptional regulator NrdR"/>
    <property type="match status" value="1"/>
</dbReference>
<dbReference type="PANTHER" id="PTHR30455">
    <property type="entry name" value="TRANSCRIPTIONAL REPRESSOR NRDR"/>
    <property type="match status" value="1"/>
</dbReference>
<dbReference type="PANTHER" id="PTHR30455:SF2">
    <property type="entry name" value="TRANSCRIPTIONAL REPRESSOR NRDR"/>
    <property type="match status" value="1"/>
</dbReference>
<dbReference type="Pfam" id="PF03477">
    <property type="entry name" value="ATP-cone"/>
    <property type="match status" value="1"/>
</dbReference>
<dbReference type="Pfam" id="PF22811">
    <property type="entry name" value="Zn_ribbon_NrdR"/>
    <property type="match status" value="1"/>
</dbReference>
<dbReference type="PROSITE" id="PS51161">
    <property type="entry name" value="ATP_CONE"/>
    <property type="match status" value="1"/>
</dbReference>
<evidence type="ECO:0000255" key="1">
    <source>
        <dbReference type="HAMAP-Rule" id="MF_00440"/>
    </source>
</evidence>
<sequence>MKCPFCNNISTNVKDSRSIEDDMLIRRRRVCPVCNSRFTTTEKLLLRSLMVIKKNGGLEQFDKKKLLSSILIATKKRPVSHDKINMMVNNIFYELEGKKDNAIPTDVIGKMVMDNLFKLDKVAYVRFASVYMNFKNINDFSNIIAKIINENNL</sequence>
<accession>Q5HC48</accession>
<accession>Q5FCR6</accession>
<proteinExistence type="inferred from homology"/>